<dbReference type="EC" id="2.1.1.-" evidence="1"/>
<dbReference type="EMBL" id="CP000033">
    <property type="protein sequence ID" value="AAV42786.1"/>
    <property type="molecule type" value="Genomic_DNA"/>
</dbReference>
<dbReference type="RefSeq" id="WP_003547033.1">
    <property type="nucleotide sequence ID" value="NC_006814.3"/>
</dbReference>
<dbReference type="RefSeq" id="YP_193817.1">
    <property type="nucleotide sequence ID" value="NC_006814.3"/>
</dbReference>
<dbReference type="SMR" id="Q5FKI8"/>
<dbReference type="STRING" id="272621.LBA0931"/>
<dbReference type="KEGG" id="lac:LBA0931"/>
<dbReference type="PATRIC" id="fig|272621.13.peg.885"/>
<dbReference type="eggNOG" id="COG2264">
    <property type="taxonomic scope" value="Bacteria"/>
</dbReference>
<dbReference type="HOGENOM" id="CLU_049382_0_1_9"/>
<dbReference type="OrthoDB" id="9785995at2"/>
<dbReference type="BioCyc" id="LACI272621:G1G49-936-MONOMER"/>
<dbReference type="Proteomes" id="UP000006381">
    <property type="component" value="Chromosome"/>
</dbReference>
<dbReference type="GO" id="GO:0005737">
    <property type="term" value="C:cytoplasm"/>
    <property type="evidence" value="ECO:0007669"/>
    <property type="project" value="UniProtKB-SubCell"/>
</dbReference>
<dbReference type="GO" id="GO:0016279">
    <property type="term" value="F:protein-lysine N-methyltransferase activity"/>
    <property type="evidence" value="ECO:0007669"/>
    <property type="project" value="RHEA"/>
</dbReference>
<dbReference type="GO" id="GO:0032259">
    <property type="term" value="P:methylation"/>
    <property type="evidence" value="ECO:0007669"/>
    <property type="project" value="UniProtKB-KW"/>
</dbReference>
<dbReference type="CDD" id="cd02440">
    <property type="entry name" value="AdoMet_MTases"/>
    <property type="match status" value="1"/>
</dbReference>
<dbReference type="Gene3D" id="3.40.50.150">
    <property type="entry name" value="Vaccinia Virus protein VP39"/>
    <property type="match status" value="1"/>
</dbReference>
<dbReference type="HAMAP" id="MF_00735">
    <property type="entry name" value="Methyltr_PrmA"/>
    <property type="match status" value="1"/>
</dbReference>
<dbReference type="InterPro" id="IPR050078">
    <property type="entry name" value="Ribosomal_L11_MeTrfase_PrmA"/>
</dbReference>
<dbReference type="InterPro" id="IPR004498">
    <property type="entry name" value="Ribosomal_PrmA_MeTrfase"/>
</dbReference>
<dbReference type="InterPro" id="IPR029063">
    <property type="entry name" value="SAM-dependent_MTases_sf"/>
</dbReference>
<dbReference type="NCBIfam" id="TIGR00406">
    <property type="entry name" value="prmA"/>
    <property type="match status" value="1"/>
</dbReference>
<dbReference type="PANTHER" id="PTHR43648">
    <property type="entry name" value="ELECTRON TRANSFER FLAVOPROTEIN BETA SUBUNIT LYSINE METHYLTRANSFERASE"/>
    <property type="match status" value="1"/>
</dbReference>
<dbReference type="PANTHER" id="PTHR43648:SF1">
    <property type="entry name" value="ELECTRON TRANSFER FLAVOPROTEIN BETA SUBUNIT LYSINE METHYLTRANSFERASE"/>
    <property type="match status" value="1"/>
</dbReference>
<dbReference type="Pfam" id="PF06325">
    <property type="entry name" value="PrmA"/>
    <property type="match status" value="1"/>
</dbReference>
<dbReference type="PIRSF" id="PIRSF000401">
    <property type="entry name" value="RPL11_MTase"/>
    <property type="match status" value="1"/>
</dbReference>
<dbReference type="SUPFAM" id="SSF53335">
    <property type="entry name" value="S-adenosyl-L-methionine-dependent methyltransferases"/>
    <property type="match status" value="1"/>
</dbReference>
<comment type="function">
    <text evidence="1">Methylates ribosomal protein L11.</text>
</comment>
<comment type="catalytic activity">
    <reaction evidence="1">
        <text>L-lysyl-[protein] + 3 S-adenosyl-L-methionine = N(6),N(6),N(6)-trimethyl-L-lysyl-[protein] + 3 S-adenosyl-L-homocysteine + 3 H(+)</text>
        <dbReference type="Rhea" id="RHEA:54192"/>
        <dbReference type="Rhea" id="RHEA-COMP:9752"/>
        <dbReference type="Rhea" id="RHEA-COMP:13826"/>
        <dbReference type="ChEBI" id="CHEBI:15378"/>
        <dbReference type="ChEBI" id="CHEBI:29969"/>
        <dbReference type="ChEBI" id="CHEBI:57856"/>
        <dbReference type="ChEBI" id="CHEBI:59789"/>
        <dbReference type="ChEBI" id="CHEBI:61961"/>
    </reaction>
</comment>
<comment type="subcellular location">
    <subcellularLocation>
        <location evidence="1">Cytoplasm</location>
    </subcellularLocation>
</comment>
<comment type="similarity">
    <text evidence="1">Belongs to the methyltransferase superfamily. PrmA family.</text>
</comment>
<name>PRMA_LACAC</name>
<feature type="chain" id="PRO_1000062122" description="Ribosomal protein L11 methyltransferase">
    <location>
        <begin position="1"/>
        <end position="314"/>
    </location>
</feature>
<feature type="binding site" evidence="1">
    <location>
        <position position="163"/>
    </location>
    <ligand>
        <name>S-adenosyl-L-methionine</name>
        <dbReference type="ChEBI" id="CHEBI:59789"/>
    </ligand>
</feature>
<feature type="binding site" evidence="1">
    <location>
        <position position="184"/>
    </location>
    <ligand>
        <name>S-adenosyl-L-methionine</name>
        <dbReference type="ChEBI" id="CHEBI:59789"/>
    </ligand>
</feature>
<feature type="binding site" evidence="1">
    <location>
        <position position="206"/>
    </location>
    <ligand>
        <name>S-adenosyl-L-methionine</name>
        <dbReference type="ChEBI" id="CHEBI:59789"/>
    </ligand>
</feature>
<feature type="binding site" evidence="1">
    <location>
        <position position="248"/>
    </location>
    <ligand>
        <name>S-adenosyl-L-methionine</name>
        <dbReference type="ChEBI" id="CHEBI:59789"/>
    </ligand>
</feature>
<reference key="1">
    <citation type="journal article" date="2005" name="Proc. Natl. Acad. Sci. U.S.A.">
        <title>Complete genome sequence of the probiotic lactic acid bacterium Lactobacillus acidophilus NCFM.</title>
        <authorList>
            <person name="Altermann E."/>
            <person name="Russell W.M."/>
            <person name="Azcarate-Peril M.A."/>
            <person name="Barrangou R."/>
            <person name="Buck B.L."/>
            <person name="McAuliffe O."/>
            <person name="Souther N."/>
            <person name="Dobson A."/>
            <person name="Duong T."/>
            <person name="Callanan M."/>
            <person name="Lick S."/>
            <person name="Hamrick A."/>
            <person name="Cano R."/>
            <person name="Klaenhammer T.R."/>
        </authorList>
    </citation>
    <scope>NUCLEOTIDE SEQUENCE [LARGE SCALE GENOMIC DNA]</scope>
    <source>
        <strain>ATCC 700396 / NCK56 / N2 / NCFM</strain>
    </source>
</reference>
<evidence type="ECO:0000255" key="1">
    <source>
        <dbReference type="HAMAP-Rule" id="MF_00735"/>
    </source>
</evidence>
<accession>Q5FKI8</accession>
<organism>
    <name type="scientific">Lactobacillus acidophilus (strain ATCC 700396 / NCK56 / N2 / NCFM)</name>
    <dbReference type="NCBI Taxonomy" id="272621"/>
    <lineage>
        <taxon>Bacteria</taxon>
        <taxon>Bacillati</taxon>
        <taxon>Bacillota</taxon>
        <taxon>Bacilli</taxon>
        <taxon>Lactobacillales</taxon>
        <taxon>Lactobacillaceae</taxon>
        <taxon>Lactobacillus</taxon>
    </lineage>
</organism>
<gene>
    <name evidence="1" type="primary">prmA</name>
    <name type="ordered locus">LBA0931</name>
</gene>
<sequence>MKLLIIKIDTSYEVEDALGVFATDNLKALGIESRKRSDFEQAGWLHDSTVVEMDDIKDLPKDTYFYAYFDEEADKDELVEKFQAKLEELKSYGLNTGEGKITTSYIEDQDWNTAWQKYYHVIDFSRHLAIVPEWEDYQPAFSDQQLIKLDPGLAFGTGNHKTTQLAMMGIERAMVKPMSVVDVGTGSGILAIAASKLGATNVLATDISDESMTAAKQNSALNNLTNIKVQKTSLLAGVEGKFDIIVANILAEILLDLIPQMDAHLNKDGQVIFSGIDYLQLPKIKKSLDENNFKIDLTMKQGRWIGLAITRKEK</sequence>
<keyword id="KW-0963">Cytoplasm</keyword>
<keyword id="KW-0489">Methyltransferase</keyword>
<keyword id="KW-1185">Reference proteome</keyword>
<keyword id="KW-0949">S-adenosyl-L-methionine</keyword>
<keyword id="KW-0808">Transferase</keyword>
<proteinExistence type="inferred from homology"/>
<protein>
    <recommendedName>
        <fullName evidence="1">Ribosomal protein L11 methyltransferase</fullName>
        <shortName evidence="1">L11 Mtase</shortName>
        <ecNumber evidence="1">2.1.1.-</ecNumber>
    </recommendedName>
</protein>